<protein>
    <recommendedName>
        <fullName evidence="1">ATP-dependent Clp protease ATP-binding subunit ClpX</fullName>
    </recommendedName>
</protein>
<organism>
    <name type="scientific">Burkholderia mallei (strain NCTC 10229)</name>
    <dbReference type="NCBI Taxonomy" id="412022"/>
    <lineage>
        <taxon>Bacteria</taxon>
        <taxon>Pseudomonadati</taxon>
        <taxon>Pseudomonadota</taxon>
        <taxon>Betaproteobacteria</taxon>
        <taxon>Burkholderiales</taxon>
        <taxon>Burkholderiaceae</taxon>
        <taxon>Burkholderia</taxon>
        <taxon>pseudomallei group</taxon>
    </lineage>
</organism>
<feature type="chain" id="PRO_1000024529" description="ATP-dependent Clp protease ATP-binding subunit ClpX">
    <location>
        <begin position="1"/>
        <end position="423"/>
    </location>
</feature>
<feature type="domain" description="ClpX-type ZB" evidence="2">
    <location>
        <begin position="3"/>
        <end position="56"/>
    </location>
</feature>
<feature type="binding site" evidence="2">
    <location>
        <position position="15"/>
    </location>
    <ligand>
        <name>Zn(2+)</name>
        <dbReference type="ChEBI" id="CHEBI:29105"/>
    </ligand>
</feature>
<feature type="binding site" evidence="2">
    <location>
        <position position="18"/>
    </location>
    <ligand>
        <name>Zn(2+)</name>
        <dbReference type="ChEBI" id="CHEBI:29105"/>
    </ligand>
</feature>
<feature type="binding site" evidence="2">
    <location>
        <position position="37"/>
    </location>
    <ligand>
        <name>Zn(2+)</name>
        <dbReference type="ChEBI" id="CHEBI:29105"/>
    </ligand>
</feature>
<feature type="binding site" evidence="2">
    <location>
        <position position="40"/>
    </location>
    <ligand>
        <name>Zn(2+)</name>
        <dbReference type="ChEBI" id="CHEBI:29105"/>
    </ligand>
</feature>
<feature type="binding site" evidence="1">
    <location>
        <begin position="122"/>
        <end position="129"/>
    </location>
    <ligand>
        <name>ATP</name>
        <dbReference type="ChEBI" id="CHEBI:30616"/>
    </ligand>
</feature>
<comment type="function">
    <text evidence="1">ATP-dependent specificity component of the Clp protease. It directs the protease to specific substrates. Can perform chaperone functions in the absence of ClpP.</text>
</comment>
<comment type="subunit">
    <text evidence="1">Component of the ClpX-ClpP complex. Forms a hexameric ring that, in the presence of ATP, binds to fourteen ClpP subunits assembled into a disk-like structure with a central cavity, resembling the structure of eukaryotic proteasomes.</text>
</comment>
<comment type="similarity">
    <text evidence="1">Belongs to the ClpX chaperone family.</text>
</comment>
<dbReference type="EMBL" id="CP000546">
    <property type="protein sequence ID" value="ABN00669.1"/>
    <property type="molecule type" value="Genomic_DNA"/>
</dbReference>
<dbReference type="RefSeq" id="WP_004192165.1">
    <property type="nucleotide sequence ID" value="NC_008836.1"/>
</dbReference>
<dbReference type="SMR" id="A2SBG4"/>
<dbReference type="GeneID" id="92979195"/>
<dbReference type="KEGG" id="bml:BMA10229_A3349"/>
<dbReference type="HOGENOM" id="CLU_014218_8_2_4"/>
<dbReference type="Proteomes" id="UP000002283">
    <property type="component" value="Chromosome I"/>
</dbReference>
<dbReference type="GO" id="GO:0009376">
    <property type="term" value="C:HslUV protease complex"/>
    <property type="evidence" value="ECO:0007669"/>
    <property type="project" value="TreeGrafter"/>
</dbReference>
<dbReference type="GO" id="GO:0005524">
    <property type="term" value="F:ATP binding"/>
    <property type="evidence" value="ECO:0007669"/>
    <property type="project" value="UniProtKB-UniRule"/>
</dbReference>
<dbReference type="GO" id="GO:0016887">
    <property type="term" value="F:ATP hydrolysis activity"/>
    <property type="evidence" value="ECO:0007669"/>
    <property type="project" value="InterPro"/>
</dbReference>
<dbReference type="GO" id="GO:0140662">
    <property type="term" value="F:ATP-dependent protein folding chaperone"/>
    <property type="evidence" value="ECO:0007669"/>
    <property type="project" value="InterPro"/>
</dbReference>
<dbReference type="GO" id="GO:0046983">
    <property type="term" value="F:protein dimerization activity"/>
    <property type="evidence" value="ECO:0007669"/>
    <property type="project" value="InterPro"/>
</dbReference>
<dbReference type="GO" id="GO:0051082">
    <property type="term" value="F:unfolded protein binding"/>
    <property type="evidence" value="ECO:0007669"/>
    <property type="project" value="UniProtKB-UniRule"/>
</dbReference>
<dbReference type="GO" id="GO:0008270">
    <property type="term" value="F:zinc ion binding"/>
    <property type="evidence" value="ECO:0007669"/>
    <property type="project" value="InterPro"/>
</dbReference>
<dbReference type="GO" id="GO:0051301">
    <property type="term" value="P:cell division"/>
    <property type="evidence" value="ECO:0007669"/>
    <property type="project" value="TreeGrafter"/>
</dbReference>
<dbReference type="GO" id="GO:0051603">
    <property type="term" value="P:proteolysis involved in protein catabolic process"/>
    <property type="evidence" value="ECO:0007669"/>
    <property type="project" value="TreeGrafter"/>
</dbReference>
<dbReference type="CDD" id="cd19497">
    <property type="entry name" value="RecA-like_ClpX"/>
    <property type="match status" value="1"/>
</dbReference>
<dbReference type="FunFam" id="1.10.8.60:FF:000002">
    <property type="entry name" value="ATP-dependent Clp protease ATP-binding subunit ClpX"/>
    <property type="match status" value="1"/>
</dbReference>
<dbReference type="FunFam" id="3.40.50.300:FF:000005">
    <property type="entry name" value="ATP-dependent Clp protease ATP-binding subunit ClpX"/>
    <property type="match status" value="1"/>
</dbReference>
<dbReference type="Gene3D" id="1.10.8.60">
    <property type="match status" value="1"/>
</dbReference>
<dbReference type="Gene3D" id="6.20.220.10">
    <property type="entry name" value="ClpX chaperone, C4-type zinc finger domain"/>
    <property type="match status" value="1"/>
</dbReference>
<dbReference type="Gene3D" id="3.40.50.300">
    <property type="entry name" value="P-loop containing nucleotide triphosphate hydrolases"/>
    <property type="match status" value="1"/>
</dbReference>
<dbReference type="HAMAP" id="MF_00175">
    <property type="entry name" value="ClpX"/>
    <property type="match status" value="1"/>
</dbReference>
<dbReference type="InterPro" id="IPR003593">
    <property type="entry name" value="AAA+_ATPase"/>
</dbReference>
<dbReference type="InterPro" id="IPR050052">
    <property type="entry name" value="ATP-dep_Clp_protease_ClpX"/>
</dbReference>
<dbReference type="InterPro" id="IPR003959">
    <property type="entry name" value="ATPase_AAA_core"/>
</dbReference>
<dbReference type="InterPro" id="IPR019489">
    <property type="entry name" value="Clp_ATPase_C"/>
</dbReference>
<dbReference type="InterPro" id="IPR004487">
    <property type="entry name" value="Clp_protease_ATP-bd_su_ClpX"/>
</dbReference>
<dbReference type="InterPro" id="IPR046425">
    <property type="entry name" value="ClpX_bact"/>
</dbReference>
<dbReference type="InterPro" id="IPR027417">
    <property type="entry name" value="P-loop_NTPase"/>
</dbReference>
<dbReference type="InterPro" id="IPR010603">
    <property type="entry name" value="Znf_CppX_C4"/>
</dbReference>
<dbReference type="InterPro" id="IPR038366">
    <property type="entry name" value="Znf_CppX_C4_sf"/>
</dbReference>
<dbReference type="NCBIfam" id="TIGR00382">
    <property type="entry name" value="clpX"/>
    <property type="match status" value="1"/>
</dbReference>
<dbReference type="NCBIfam" id="NF003745">
    <property type="entry name" value="PRK05342.1"/>
    <property type="match status" value="1"/>
</dbReference>
<dbReference type="PANTHER" id="PTHR48102:SF7">
    <property type="entry name" value="ATP-DEPENDENT CLP PROTEASE ATP-BINDING SUBUNIT CLPX-LIKE, MITOCHONDRIAL"/>
    <property type="match status" value="1"/>
</dbReference>
<dbReference type="PANTHER" id="PTHR48102">
    <property type="entry name" value="ATP-DEPENDENT CLP PROTEASE ATP-BINDING SUBUNIT CLPX-LIKE, MITOCHONDRIAL-RELATED"/>
    <property type="match status" value="1"/>
</dbReference>
<dbReference type="Pfam" id="PF07724">
    <property type="entry name" value="AAA_2"/>
    <property type="match status" value="1"/>
</dbReference>
<dbReference type="Pfam" id="PF10431">
    <property type="entry name" value="ClpB_D2-small"/>
    <property type="match status" value="1"/>
</dbReference>
<dbReference type="Pfam" id="PF06689">
    <property type="entry name" value="zf-C4_ClpX"/>
    <property type="match status" value="1"/>
</dbReference>
<dbReference type="SMART" id="SM00382">
    <property type="entry name" value="AAA"/>
    <property type="match status" value="1"/>
</dbReference>
<dbReference type="SMART" id="SM01086">
    <property type="entry name" value="ClpB_D2-small"/>
    <property type="match status" value="1"/>
</dbReference>
<dbReference type="SMART" id="SM00994">
    <property type="entry name" value="zf-C4_ClpX"/>
    <property type="match status" value="1"/>
</dbReference>
<dbReference type="SUPFAM" id="SSF57716">
    <property type="entry name" value="Glucocorticoid receptor-like (DNA-binding domain)"/>
    <property type="match status" value="1"/>
</dbReference>
<dbReference type="SUPFAM" id="SSF52540">
    <property type="entry name" value="P-loop containing nucleoside triphosphate hydrolases"/>
    <property type="match status" value="1"/>
</dbReference>
<dbReference type="PROSITE" id="PS51902">
    <property type="entry name" value="CLPX_ZB"/>
    <property type="match status" value="1"/>
</dbReference>
<proteinExistence type="inferred from homology"/>
<reference key="1">
    <citation type="journal article" date="2010" name="Genome Biol. Evol.">
        <title>Continuing evolution of Burkholderia mallei through genome reduction and large-scale rearrangements.</title>
        <authorList>
            <person name="Losada L."/>
            <person name="Ronning C.M."/>
            <person name="DeShazer D."/>
            <person name="Woods D."/>
            <person name="Fedorova N."/>
            <person name="Kim H.S."/>
            <person name="Shabalina S.A."/>
            <person name="Pearson T.R."/>
            <person name="Brinkac L."/>
            <person name="Tan P."/>
            <person name="Nandi T."/>
            <person name="Crabtree J."/>
            <person name="Badger J."/>
            <person name="Beckstrom-Sternberg S."/>
            <person name="Saqib M."/>
            <person name="Schutzer S.E."/>
            <person name="Keim P."/>
            <person name="Nierman W.C."/>
        </authorList>
    </citation>
    <scope>NUCLEOTIDE SEQUENCE [LARGE SCALE GENOMIC DNA]</scope>
    <source>
        <strain>NCTC 10229</strain>
    </source>
</reference>
<sequence>MADKKGSNSEKLLYCSFCGKSQHEVKKLIAGPSVFICDECIDLCNEIIRDEAAAAGVEASLSKSDLPSPQEIRDILDQYVIGQERAKKILAVAVYNHYKRLKHLDKKDDVELSKSNILLIGPTGSGKTLLAQTLARLLNVPFVIADATTLTEAGYVGEDVENIIQKLLQNCNYEVEKAQRGIVYIDEIDKISCKSDNPSITRDVSGEGVQQALLKLVEGTMASVPPQGGRKHPNQDFIQVDTTNILFICGGAFDGLEKVITDRTEKTGIGFGATVKSKQERDAGEVLREVEPEDLIKFGLIPELIGRLPVVATLGKLDEAALMKILVEPKNALVKQYQKLFAMERVELEIRPDALQAVARKAIRRKTGARGLRSIIEQALLDVMYELPTLKGVSKVIIDDNVIEGDGKPLLIYEDTPKVAGSN</sequence>
<accession>A2SBG4</accession>
<evidence type="ECO:0000255" key="1">
    <source>
        <dbReference type="HAMAP-Rule" id="MF_00175"/>
    </source>
</evidence>
<evidence type="ECO:0000255" key="2">
    <source>
        <dbReference type="PROSITE-ProRule" id="PRU01250"/>
    </source>
</evidence>
<name>CLPX_BURM9</name>
<keyword id="KW-0067">ATP-binding</keyword>
<keyword id="KW-0143">Chaperone</keyword>
<keyword id="KW-0479">Metal-binding</keyword>
<keyword id="KW-0547">Nucleotide-binding</keyword>
<keyword id="KW-0862">Zinc</keyword>
<gene>
    <name evidence="1" type="primary">clpX</name>
    <name type="ordered locus">BMA10229_A3349</name>
</gene>